<feature type="signal peptide" evidence="2">
    <location>
        <begin position="1"/>
        <end position="27"/>
    </location>
</feature>
<feature type="chain" id="PRO_0000452909" description="Apolipoprotein C-IV">
    <location>
        <begin position="28"/>
        <end position="127"/>
    </location>
</feature>
<proteinExistence type="inferred from homology"/>
<evidence type="ECO:0000250" key="1"/>
<evidence type="ECO:0000255" key="2"/>
<evidence type="ECO:0000305" key="3"/>
<comment type="function">
    <text evidence="1">May participate in lipoprotein metabolism.</text>
</comment>
<comment type="subcellular location">
    <subcellularLocation>
        <location evidence="1">Secreted</location>
    </subcellularLocation>
</comment>
<comment type="similarity">
    <text evidence="3">Belongs to the apolipoprotein C4 family.</text>
</comment>
<reference key="1">
    <citation type="submission" date="2018-02" db="EMBL/GenBank/DDBJ databases">
        <title>The 200 mammals project: sequencing genomes by a novel cost-effective method, yielding a high resolution annotation of the human genome.</title>
        <authorList>
            <person name="Johnson J."/>
            <person name="Muren E."/>
            <person name="Swofford R."/>
            <person name="Turner-Maier J."/>
            <person name="Marinescu V.D."/>
            <person name="Genereux D.P."/>
            <person name="Alfoldi J."/>
            <person name="Birren B."/>
            <person name="Karlsson E.K."/>
            <person name="Lindblad-Toh K."/>
        </authorList>
    </citation>
    <scope>NUCLEOTIDE SEQUENCE [LARGE SCALE GENOMIC DNA]</scope>
</reference>
<reference key="2">
    <citation type="unpublished observations" date="2021-03">
        <authorList>
            <person name="Puppione D.L."/>
        </authorList>
    </citation>
    <scope>IDENTIFICATION</scope>
</reference>
<dbReference type="EMBL" id="PVID01016054">
    <property type="status" value="NOT_ANNOTATED_CDS"/>
    <property type="molecule type" value="Genomic_DNA"/>
</dbReference>
<dbReference type="GO" id="GO:0034364">
    <property type="term" value="C:high-density lipoprotein particle"/>
    <property type="evidence" value="ECO:0007669"/>
    <property type="project" value="TreeGrafter"/>
</dbReference>
<dbReference type="GO" id="GO:0034361">
    <property type="term" value="C:very-low-density lipoprotein particle"/>
    <property type="evidence" value="ECO:0007669"/>
    <property type="project" value="TreeGrafter"/>
</dbReference>
<dbReference type="GO" id="GO:0006869">
    <property type="term" value="P:lipid transport"/>
    <property type="evidence" value="ECO:0007669"/>
    <property type="project" value="UniProtKB-KW"/>
</dbReference>
<dbReference type="GO" id="GO:0010890">
    <property type="term" value="P:positive regulation of triglyceride storage"/>
    <property type="evidence" value="ECO:0007669"/>
    <property type="project" value="TreeGrafter"/>
</dbReference>
<dbReference type="GO" id="GO:0070328">
    <property type="term" value="P:triglyceride homeostasis"/>
    <property type="evidence" value="ECO:0007669"/>
    <property type="project" value="TreeGrafter"/>
</dbReference>
<dbReference type="InterPro" id="IPR028120">
    <property type="entry name" value="APOC4"/>
</dbReference>
<dbReference type="PANTHER" id="PTHR32288">
    <property type="entry name" value="APOLIPOPROTEIN C-IV"/>
    <property type="match status" value="1"/>
</dbReference>
<dbReference type="PANTHER" id="PTHR32288:SF0">
    <property type="entry name" value="APOLIPOPROTEIN C-IV"/>
    <property type="match status" value="1"/>
</dbReference>
<dbReference type="Pfam" id="PF15119">
    <property type="entry name" value="APOC4"/>
    <property type="match status" value="1"/>
</dbReference>
<protein>
    <recommendedName>
        <fullName>Apolipoprotein C-IV</fullName>
        <shortName>Apo-CIV</shortName>
        <shortName>ApoC-IV</shortName>
    </recommendedName>
    <alternativeName>
        <fullName>Apolipoprotein C4</fullName>
    </alternativeName>
</protein>
<gene>
    <name type="primary">APOC4</name>
</gene>
<name>APOC4_TAPTE</name>
<accession>P0DUP6</accession>
<organism>
    <name type="scientific">Tapirus terrestris</name>
    <name type="common">Lowland tapir</name>
    <name type="synonym">Brazilian tapir</name>
    <dbReference type="NCBI Taxonomy" id="9801"/>
    <lineage>
        <taxon>Eukaryota</taxon>
        <taxon>Metazoa</taxon>
        <taxon>Chordata</taxon>
        <taxon>Craniata</taxon>
        <taxon>Vertebrata</taxon>
        <taxon>Euteleostomi</taxon>
        <taxon>Mammalia</taxon>
        <taxon>Eutheria</taxon>
        <taxon>Laurasiatheria</taxon>
        <taxon>Perissodactyla</taxon>
        <taxon>Tapiridae</taxon>
        <taxon>Tapirus</taxon>
    </lineage>
</organism>
<keyword id="KW-0445">Lipid transport</keyword>
<keyword id="KW-0964">Secreted</keyword>
<keyword id="KW-0732">Signal</keyword>
<keyword id="KW-0813">Transport</keyword>
<sequence>MSLPVRRASPLLSLCFCVLVLAWAVACQQEVPAGSPSPPPEPASSPWGLVHSKVKEFLEPLVTKTRERWQWFWDPGAFQGFVQTYYDDHLRGLGSRARAWLHGSKDSLLSKAYNLCPQLLCGDGDQG</sequence>